<gene>
    <name type="primary">cdc-25.1</name>
    <name type="ORF">K06A5.7</name>
</gene>
<feature type="chain" id="PRO_0000198655" description="M-phase inducer phosphatase cdc-25.1">
    <location>
        <begin position="1"/>
        <end position="604"/>
    </location>
</feature>
<feature type="domain" description="Rhodanese" evidence="1">
    <location>
        <begin position="305"/>
        <end position="413"/>
    </location>
</feature>
<feature type="region of interest" description="Disordered" evidence="2">
    <location>
        <begin position="33"/>
        <end position="67"/>
    </location>
</feature>
<feature type="region of interest" description="Disordered" evidence="2">
    <location>
        <begin position="127"/>
        <end position="188"/>
    </location>
</feature>
<feature type="region of interest" description="Disordered" evidence="2">
    <location>
        <begin position="443"/>
        <end position="464"/>
    </location>
</feature>
<feature type="region of interest" description="Disordered" evidence="2">
    <location>
        <begin position="562"/>
        <end position="588"/>
    </location>
</feature>
<feature type="compositionally biased region" description="Polar residues" evidence="2">
    <location>
        <begin position="44"/>
        <end position="54"/>
    </location>
</feature>
<feature type="compositionally biased region" description="Basic and acidic residues" evidence="2">
    <location>
        <begin position="127"/>
        <end position="138"/>
    </location>
</feature>
<keyword id="KW-0131">Cell cycle</keyword>
<keyword id="KW-0132">Cell division</keyword>
<keyword id="KW-0378">Hydrolase</keyword>
<keyword id="KW-0498">Mitosis</keyword>
<keyword id="KW-0904">Protein phosphatase</keyword>
<keyword id="KW-1185">Reference proteome</keyword>
<proteinExistence type="inferred from homology"/>
<reference key="1">
    <citation type="journal article" date="1998" name="Science">
        <title>Genome sequence of the nematode C. elegans: a platform for investigating biology.</title>
        <authorList>
            <consortium name="The C. elegans sequencing consortium"/>
        </authorList>
    </citation>
    <scope>NUCLEOTIDE SEQUENCE [LARGE SCALE GENOMIC DNA]</scope>
    <source>
        <strain>Bristol N2</strain>
    </source>
</reference>
<reference key="2">
    <citation type="journal article" date="1998" name="Gene">
        <title>The four cdc25 genes from the nematode Caenorhabditis elegans.</title>
        <authorList>
            <person name="Ashcroft N.R."/>
            <person name="Kosinski M.E."/>
            <person name="Wickramasinghe D."/>
            <person name="Donovan P.J."/>
            <person name="Golden A."/>
        </authorList>
    </citation>
    <scope>IDENTIFICATION</scope>
</reference>
<dbReference type="EC" id="3.1.3.48"/>
<dbReference type="EMBL" id="FO080960">
    <property type="protein sequence ID" value="CCD68116.1"/>
    <property type="molecule type" value="Genomic_DNA"/>
</dbReference>
<dbReference type="PIR" id="T15091">
    <property type="entry name" value="T15091"/>
</dbReference>
<dbReference type="RefSeq" id="NP_491862.1">
    <property type="nucleotide sequence ID" value="NM_059461.6"/>
</dbReference>
<dbReference type="SMR" id="O44552"/>
<dbReference type="BioGRID" id="37805">
    <property type="interactions" value="10"/>
</dbReference>
<dbReference type="DIP" id="DIP-25238N"/>
<dbReference type="FunCoup" id="O44552">
    <property type="interactions" value="377"/>
</dbReference>
<dbReference type="STRING" id="6239.K06A5.7.2"/>
<dbReference type="iPTMnet" id="O44552"/>
<dbReference type="PaxDb" id="6239-K06A5.7.1"/>
<dbReference type="PeptideAtlas" id="O44552"/>
<dbReference type="EnsemblMetazoa" id="K06A5.7.1">
    <property type="protein sequence ID" value="K06A5.7.1"/>
    <property type="gene ID" value="WBGene00000386"/>
</dbReference>
<dbReference type="GeneID" id="172353"/>
<dbReference type="KEGG" id="cel:CELE_K06A5.7"/>
<dbReference type="UCSC" id="K06A5.7.1">
    <property type="organism name" value="c. elegans"/>
</dbReference>
<dbReference type="AGR" id="WB:WBGene00000386"/>
<dbReference type="CTD" id="172353"/>
<dbReference type="WormBase" id="K06A5.7">
    <property type="protein sequence ID" value="CE11778"/>
    <property type="gene ID" value="WBGene00000386"/>
    <property type="gene designation" value="cdc-25.1"/>
</dbReference>
<dbReference type="eggNOG" id="KOG3772">
    <property type="taxonomic scope" value="Eukaryota"/>
</dbReference>
<dbReference type="HOGENOM" id="CLU_452865_0_0_1"/>
<dbReference type="InParanoid" id="O44552"/>
<dbReference type="OMA" id="HVEYPEM"/>
<dbReference type="OrthoDB" id="26523at2759"/>
<dbReference type="PhylomeDB" id="O44552"/>
<dbReference type="Reactome" id="R-CEL-156711">
    <property type="pathway name" value="Polo-like kinase mediated events"/>
</dbReference>
<dbReference type="Reactome" id="R-CEL-176187">
    <property type="pathway name" value="Activation of ATR in response to replication stress"/>
</dbReference>
<dbReference type="Reactome" id="R-CEL-5625740">
    <property type="pathway name" value="RHO GTPases activate PKNs"/>
</dbReference>
<dbReference type="Reactome" id="R-CEL-5689880">
    <property type="pathway name" value="Ub-specific processing proteases"/>
</dbReference>
<dbReference type="Reactome" id="R-CEL-69202">
    <property type="pathway name" value="Cyclin E associated events during G1/S transition"/>
</dbReference>
<dbReference type="Reactome" id="R-CEL-69273">
    <property type="pathway name" value="Cyclin A/B1/B2 associated events during G2/M transition"/>
</dbReference>
<dbReference type="Reactome" id="R-CEL-69601">
    <property type="pathway name" value="Ubiquitin Mediated Degradation of Phosphorylated Cdc25A"/>
</dbReference>
<dbReference type="Reactome" id="R-CEL-69656">
    <property type="pathway name" value="Cyclin A:Cdk2-associated events at S phase entry"/>
</dbReference>
<dbReference type="Reactome" id="R-CEL-75035">
    <property type="pathway name" value="Chk1/Chk2(Cds1) mediated inactivation of Cyclin B:Cdk1 complex"/>
</dbReference>
<dbReference type="PRO" id="PR:O44552"/>
<dbReference type="Proteomes" id="UP000001940">
    <property type="component" value="Chromosome I"/>
</dbReference>
<dbReference type="Bgee" id="WBGene00000386">
    <property type="expression patterns" value="Expressed in germ line (C elegans) and 4 other cell types or tissues"/>
</dbReference>
<dbReference type="GO" id="GO:0005737">
    <property type="term" value="C:cytoplasm"/>
    <property type="evidence" value="ECO:0000318"/>
    <property type="project" value="GO_Central"/>
</dbReference>
<dbReference type="GO" id="GO:0005634">
    <property type="term" value="C:nucleus"/>
    <property type="evidence" value="ECO:0000314"/>
    <property type="project" value="WormBase"/>
</dbReference>
<dbReference type="GO" id="GO:0004721">
    <property type="term" value="F:phosphoprotein phosphatase activity"/>
    <property type="evidence" value="ECO:0000250"/>
    <property type="project" value="WormBase"/>
</dbReference>
<dbReference type="GO" id="GO:0004725">
    <property type="term" value="F:protein tyrosine phosphatase activity"/>
    <property type="evidence" value="ECO:0000318"/>
    <property type="project" value="GO_Central"/>
</dbReference>
<dbReference type="GO" id="GO:0051301">
    <property type="term" value="P:cell division"/>
    <property type="evidence" value="ECO:0007669"/>
    <property type="project" value="UniProtKB-KW"/>
</dbReference>
<dbReference type="GO" id="GO:0000086">
    <property type="term" value="P:G2/M transition of mitotic cell cycle"/>
    <property type="evidence" value="ECO:0000318"/>
    <property type="project" value="GO_Central"/>
</dbReference>
<dbReference type="GO" id="GO:0051321">
    <property type="term" value="P:meiotic cell cycle"/>
    <property type="evidence" value="ECO:0000315"/>
    <property type="project" value="WormBase"/>
</dbReference>
<dbReference type="GO" id="GO:0000212">
    <property type="term" value="P:meiotic spindle organization"/>
    <property type="evidence" value="ECO:0000315"/>
    <property type="project" value="WormBase"/>
</dbReference>
<dbReference type="GO" id="GO:0010971">
    <property type="term" value="P:positive regulation of G2/M transition of mitotic cell cycle"/>
    <property type="evidence" value="ECO:0000318"/>
    <property type="project" value="GO_Central"/>
</dbReference>
<dbReference type="GO" id="GO:0110032">
    <property type="term" value="P:positive regulation of G2/MI transition of meiotic cell cycle"/>
    <property type="evidence" value="ECO:0000318"/>
    <property type="project" value="GO_Central"/>
</dbReference>
<dbReference type="GO" id="GO:0045931">
    <property type="term" value="P:positive regulation of mitotic cell cycle"/>
    <property type="evidence" value="ECO:0000315"/>
    <property type="project" value="WormBase"/>
</dbReference>
<dbReference type="CDD" id="cd01530">
    <property type="entry name" value="Cdc25"/>
    <property type="match status" value="1"/>
</dbReference>
<dbReference type="FunFam" id="3.40.250.10:FF:000021">
    <property type="entry name" value="M-phase inducer phosphatase cdc-25.2"/>
    <property type="match status" value="1"/>
</dbReference>
<dbReference type="Gene3D" id="3.40.250.10">
    <property type="entry name" value="Rhodanese-like domain"/>
    <property type="match status" value="1"/>
</dbReference>
<dbReference type="InterPro" id="IPR000751">
    <property type="entry name" value="MPI_Phosphatase"/>
</dbReference>
<dbReference type="InterPro" id="IPR001763">
    <property type="entry name" value="Rhodanese-like_dom"/>
</dbReference>
<dbReference type="InterPro" id="IPR036873">
    <property type="entry name" value="Rhodanese-like_dom_sf"/>
</dbReference>
<dbReference type="PANTHER" id="PTHR10828:SF43">
    <property type="entry name" value="M-PHASE INDUCER PHOSPHATASE CDC-25.1"/>
    <property type="match status" value="1"/>
</dbReference>
<dbReference type="PANTHER" id="PTHR10828">
    <property type="entry name" value="M-PHASE INDUCER PHOSPHATASE DUAL SPECIFICITY PHOSPHATASE CDC25"/>
    <property type="match status" value="1"/>
</dbReference>
<dbReference type="Pfam" id="PF00581">
    <property type="entry name" value="Rhodanese"/>
    <property type="match status" value="1"/>
</dbReference>
<dbReference type="PRINTS" id="PR00716">
    <property type="entry name" value="MPIPHPHTASE"/>
</dbReference>
<dbReference type="SMART" id="SM00450">
    <property type="entry name" value="RHOD"/>
    <property type="match status" value="1"/>
</dbReference>
<dbReference type="SUPFAM" id="SSF52821">
    <property type="entry name" value="Rhodanese/Cell cycle control phosphatase"/>
    <property type="match status" value="1"/>
</dbReference>
<dbReference type="PROSITE" id="PS50206">
    <property type="entry name" value="RHODANESE_3"/>
    <property type="match status" value="1"/>
</dbReference>
<name>MPIP1_CAEEL</name>
<evidence type="ECO:0000255" key="1">
    <source>
        <dbReference type="PROSITE-ProRule" id="PRU00173"/>
    </source>
</evidence>
<evidence type="ECO:0000256" key="2">
    <source>
        <dbReference type="SAM" id="MobiDB-lite"/>
    </source>
</evidence>
<evidence type="ECO:0000305" key="3"/>
<accession>O44552</accession>
<organism>
    <name type="scientific">Caenorhabditis elegans</name>
    <dbReference type="NCBI Taxonomy" id="6239"/>
    <lineage>
        <taxon>Eukaryota</taxon>
        <taxon>Metazoa</taxon>
        <taxon>Ecdysozoa</taxon>
        <taxon>Nematoda</taxon>
        <taxon>Chromadorea</taxon>
        <taxon>Rhabditida</taxon>
        <taxon>Rhabditina</taxon>
        <taxon>Rhabditomorpha</taxon>
        <taxon>Rhabditoidea</taxon>
        <taxon>Rhabditidae</taxon>
        <taxon>Peloderinae</taxon>
        <taxon>Caenorhabditis</taxon>
    </lineage>
</organism>
<comment type="catalytic activity">
    <reaction>
        <text>O-phospho-L-tyrosyl-[protein] + H2O = L-tyrosyl-[protein] + phosphate</text>
        <dbReference type="Rhea" id="RHEA:10684"/>
        <dbReference type="Rhea" id="RHEA-COMP:10136"/>
        <dbReference type="Rhea" id="RHEA-COMP:20101"/>
        <dbReference type="ChEBI" id="CHEBI:15377"/>
        <dbReference type="ChEBI" id="CHEBI:43474"/>
        <dbReference type="ChEBI" id="CHEBI:46858"/>
        <dbReference type="ChEBI" id="CHEBI:61978"/>
        <dbReference type="EC" id="3.1.3.48"/>
    </reaction>
</comment>
<comment type="similarity">
    <text evidence="3">Belongs to the MPI phosphatase family.</text>
</comment>
<sequence length="604" mass="67892">MATTGEKAIYEDQNNVNIIENVVDVANGINESPKTLFEEDGSSRDSGVSMTSCSDKSDASPEEDVDFSKLESGRVALTDCSNFVSILQRNSSVSSSRSSSFYNYDTPTGRKMKTVFDLDSLDHSEYEKRVMSERPTDNHRKRTSSSMSPSVTLLDRKRSRNLSLVAPQSDKSCRYNGLNNPRDDPFGDEDDEVFEQSNVRNSQVQNTSIFAQPAPRTATSLWDLAPPMFFERKTSDTSGNGSFQERPKQILRAMSVGEIDSELPPTLEVKYTLPGVDNPQRESQAFRSISPTTLLLEFQRLGDDFDKKYIIVDCRFPFEYKGGHVKGAINLFRHDKIKPIFFPENGEASSFQNRVPIFYCEYSQKRGPTMAHAVRSIDRVLNELRYPHVEYPEMYLLDYGYKSLWSTAECRQICEPCSYIPMTHSSFSMEFKSARLERHHSMASLKPNGETSHREEKKKRCTRSVIRRNNSSLNMLSRSSSALTSTGSKTSSMENILYGLDDERRPKWVSAFDIQSTESENDLDAALIYQRNISSNASNASSIVNLAEERIVQLGLQVITPDFPDRPSESSSTTPAGEHLPLGEGGHQIPCGILDFSSISDDAE</sequence>
<protein>
    <recommendedName>
        <fullName>M-phase inducer phosphatase cdc-25.1</fullName>
        <ecNumber>3.1.3.48</ecNumber>
    </recommendedName>
    <alternativeName>
        <fullName>Cell division cycle-related protein 25.1</fullName>
    </alternativeName>
</protein>